<gene>
    <name type="primary">PLIN2</name>
    <name type="synonym">ADFP</name>
    <name type="synonym">ADRP</name>
</gene>
<keyword id="KW-0007">Acetylation</keyword>
<keyword id="KW-0025">Alternative splicing</keyword>
<keyword id="KW-0551">Lipid droplet</keyword>
<keyword id="KW-0472">Membrane</keyword>
<keyword id="KW-0597">Phosphoprotein</keyword>
<keyword id="KW-1185">Reference proteome</keyword>
<keyword id="KW-0832">Ubl conjugation</keyword>
<protein>
    <recommendedName>
        <fullName>Perilipin-2</fullName>
    </recommendedName>
    <alternativeName>
        <fullName>Adipophilin</fullName>
    </alternativeName>
    <alternativeName>
        <fullName>Adipose differentiation-related protein</fullName>
        <shortName>ADRP</shortName>
    </alternativeName>
</protein>
<comment type="function">
    <text evidence="2">Structural component of lipid droplets, which is required for the formation and maintenance of lipid storage droplets.</text>
</comment>
<comment type="subunit">
    <text evidence="1">Interacts with IRGC.</text>
</comment>
<comment type="subcellular location">
    <subcellularLocation>
        <location evidence="1">Membrane</location>
        <topology evidence="1">Peripheral membrane protein</topology>
    </subcellularLocation>
    <subcellularLocation>
        <location evidence="1">Lipid droplet</location>
    </subcellularLocation>
</comment>
<comment type="alternative products">
    <event type="alternative splicing"/>
    <isoform>
        <id>Q9TUM6-1</id>
        <name>1</name>
        <sequence type="displayed"/>
    </isoform>
    <isoform>
        <id>Q9TUM6-2</id>
        <name>2</name>
        <sequence type="described" ref="VSP_019867"/>
    </isoform>
</comment>
<comment type="tissue specificity">
    <text evidence="4">Milk lipid globules.</text>
</comment>
<comment type="PTM">
    <text evidence="2">Acylated; primarily with C14, C16 and C18 fatty acids.</text>
</comment>
<comment type="PTM">
    <text evidence="2">Phosphorylation at Tyr-232 by isoform 1 of CHKA (CHKalpha2) promotes dissociation from lipid droplets: dissociation is followed by recruitment of autophagosome machinery to lipid droplets and subsequent lipid droplet lipolysis.</text>
</comment>
<comment type="PTM">
    <text evidence="2">Polyubiquitination of Nt-acetylatable A-PLIN2 by MARCHF6 lead to degradation by 26S proteasomes.</text>
</comment>
<comment type="similarity">
    <text evidence="6">Belongs to the perilipin family.</text>
</comment>
<feature type="initiator methionine" description="Removed" evidence="2">
    <location>
        <position position="1"/>
    </location>
</feature>
<feature type="chain" id="PRO_0000099887" description="Perilipin-2">
    <location>
        <begin position="2"/>
        <end position="450"/>
    </location>
</feature>
<feature type="region of interest" description="Disordered" evidence="3">
    <location>
        <begin position="411"/>
        <end position="450"/>
    </location>
</feature>
<feature type="compositionally biased region" description="Basic residues" evidence="3">
    <location>
        <begin position="423"/>
        <end position="433"/>
    </location>
</feature>
<feature type="compositionally biased region" description="Polar residues" evidence="3">
    <location>
        <begin position="440"/>
        <end position="450"/>
    </location>
</feature>
<feature type="modified residue" description="N-acetylalanine" evidence="2">
    <location>
        <position position="2"/>
    </location>
</feature>
<feature type="modified residue" description="Phosphoserine" evidence="2">
    <location>
        <position position="215"/>
    </location>
</feature>
<feature type="modified residue" description="Phosphotyrosine" evidence="2">
    <location>
        <position position="232"/>
    </location>
</feature>
<feature type="splice variant" id="VSP_019867" description="In isoform 2." evidence="5">
    <original>VGPFYPQVTESESAQAPGTTRRPGRWSRKHPKPVPVSNAEGSQPDDSSS</original>
    <variation>ALDFSITDFTSETDEIPDIIALEEEDGPNHSHANGPEPSQGKMLNN</variation>
    <location>
        <begin position="402"/>
        <end position="450"/>
    </location>
</feature>
<feature type="sequence conflict" description="In Ref. 2; AAI02212." evidence="6" ref="2">
    <original>M</original>
    <variation>T</variation>
    <location>
        <position position="54"/>
    </location>
</feature>
<organism>
    <name type="scientific">Bos taurus</name>
    <name type="common">Bovine</name>
    <dbReference type="NCBI Taxonomy" id="9913"/>
    <lineage>
        <taxon>Eukaryota</taxon>
        <taxon>Metazoa</taxon>
        <taxon>Chordata</taxon>
        <taxon>Craniata</taxon>
        <taxon>Vertebrata</taxon>
        <taxon>Euteleostomi</taxon>
        <taxon>Mammalia</taxon>
        <taxon>Eutheria</taxon>
        <taxon>Laurasiatheria</taxon>
        <taxon>Artiodactyla</taxon>
        <taxon>Ruminantia</taxon>
        <taxon>Pecora</taxon>
        <taxon>Bovidae</taxon>
        <taxon>Bovinae</taxon>
        <taxon>Bos</taxon>
    </lineage>
</organism>
<name>PLIN2_BOVIN</name>
<dbReference type="EMBL" id="AJ011680">
    <property type="protein sequence ID" value="CAB53860.1"/>
    <property type="molecule type" value="mRNA"/>
</dbReference>
<dbReference type="EMBL" id="BC102211">
    <property type="protein sequence ID" value="AAI02212.1"/>
    <property type="molecule type" value="mRNA"/>
</dbReference>
<dbReference type="RefSeq" id="NP_776405.1">
    <molecule id="Q9TUM6-1"/>
    <property type="nucleotide sequence ID" value="NM_173980.2"/>
</dbReference>
<dbReference type="SMR" id="Q9TUM6"/>
<dbReference type="FunCoup" id="Q9TUM6">
    <property type="interactions" value="337"/>
</dbReference>
<dbReference type="STRING" id="9913.ENSBTAP00000007519"/>
<dbReference type="PaxDb" id="9913-ENSBTAP00000007519"/>
<dbReference type="PeptideAtlas" id="Q9TUM6"/>
<dbReference type="GeneID" id="280981"/>
<dbReference type="KEGG" id="bta:280981"/>
<dbReference type="CTD" id="123"/>
<dbReference type="eggNOG" id="ENOG502QRYF">
    <property type="taxonomic scope" value="Eukaryota"/>
</dbReference>
<dbReference type="InParanoid" id="Q9TUM6"/>
<dbReference type="OrthoDB" id="376826at2759"/>
<dbReference type="Proteomes" id="UP000009136">
    <property type="component" value="Unplaced"/>
</dbReference>
<dbReference type="GO" id="GO:0005829">
    <property type="term" value="C:cytosol"/>
    <property type="evidence" value="ECO:0000318"/>
    <property type="project" value="GO_Central"/>
</dbReference>
<dbReference type="GO" id="GO:0005811">
    <property type="term" value="C:lipid droplet"/>
    <property type="evidence" value="ECO:0000250"/>
    <property type="project" value="UniProtKB"/>
</dbReference>
<dbReference type="GO" id="GO:0016020">
    <property type="term" value="C:membrane"/>
    <property type="evidence" value="ECO:0007669"/>
    <property type="project" value="UniProtKB-SubCell"/>
</dbReference>
<dbReference type="GO" id="GO:0042149">
    <property type="term" value="P:cellular response to glucose starvation"/>
    <property type="evidence" value="ECO:0000250"/>
    <property type="project" value="UniProtKB"/>
</dbReference>
<dbReference type="GO" id="GO:1905691">
    <property type="term" value="P:lipid droplet disassembly"/>
    <property type="evidence" value="ECO:0000250"/>
    <property type="project" value="UniProtKB"/>
</dbReference>
<dbReference type="GO" id="GO:0019915">
    <property type="term" value="P:lipid storage"/>
    <property type="evidence" value="ECO:0000250"/>
    <property type="project" value="UniProtKB"/>
</dbReference>
<dbReference type="GO" id="GO:0010890">
    <property type="term" value="P:positive regulation of triglyceride storage"/>
    <property type="evidence" value="ECO:0000318"/>
    <property type="project" value="GO_Central"/>
</dbReference>
<dbReference type="FunFam" id="1.20.120.340:FF:000005">
    <property type="entry name" value="Perilipin"/>
    <property type="match status" value="1"/>
</dbReference>
<dbReference type="FunFam" id="3.30.720.170:FF:000004">
    <property type="entry name" value="Perilipin"/>
    <property type="match status" value="1"/>
</dbReference>
<dbReference type="Gene3D" id="1.20.120.340">
    <property type="entry name" value="Flagellar protein FliS"/>
    <property type="match status" value="1"/>
</dbReference>
<dbReference type="Gene3D" id="3.30.720.170">
    <property type="entry name" value="Perilipin, alpha-beta domain"/>
    <property type="match status" value="1"/>
</dbReference>
<dbReference type="InterPro" id="IPR004279">
    <property type="entry name" value="Perilipin"/>
</dbReference>
<dbReference type="PANTHER" id="PTHR14024">
    <property type="entry name" value="PERILIPIN"/>
    <property type="match status" value="1"/>
</dbReference>
<dbReference type="PANTHER" id="PTHR14024:SF25">
    <property type="entry name" value="PERILIPIN-2"/>
    <property type="match status" value="1"/>
</dbReference>
<dbReference type="Pfam" id="PF03036">
    <property type="entry name" value="Perilipin"/>
    <property type="match status" value="1"/>
</dbReference>
<dbReference type="PIRSF" id="PIRSF036881">
    <property type="entry name" value="PAT"/>
    <property type="match status" value="1"/>
</dbReference>
<dbReference type="SUPFAM" id="SSF109775">
    <property type="entry name" value="Mannose-6-phosphate receptor binding protein 1 (Tip47), C-terminal domain"/>
    <property type="match status" value="1"/>
</dbReference>
<proteinExistence type="evidence at transcript level"/>
<reference key="1">
    <citation type="journal article" date="1999" name="J. Dairy Sci.">
        <title>Isolation of adipophilin and butyrophilin from bovine milk and characterization of a cDNA encoding adipophilin.</title>
        <authorList>
            <person name="Nielsen R.L."/>
            <person name="Andersen M.H."/>
            <person name="Mabhout P."/>
            <person name="Berglund L."/>
            <person name="Petersen T.E."/>
            <person name="Rasmussen J.T."/>
        </authorList>
    </citation>
    <scope>NUCLEOTIDE SEQUENCE [MRNA] (ISOFORM 1)</scope>
    <scope>TISSUE SPECIFICITY</scope>
    <source>
        <tissue>Mammary gland</tissue>
    </source>
</reference>
<reference key="2">
    <citation type="submission" date="2005-08" db="EMBL/GenBank/DDBJ databases">
        <authorList>
            <consortium name="NIH - Mammalian Gene Collection (MGC) project"/>
        </authorList>
    </citation>
    <scope>NUCLEOTIDE SEQUENCE [LARGE SCALE MRNA] (ISOFORM 2)</scope>
    <source>
        <strain>Crossbred X Angus</strain>
        <tissue>Ileum</tissue>
    </source>
</reference>
<accession>Q9TUM6</accession>
<accession>Q3T0Y0</accession>
<sequence length="450" mass="49368">MASVAVEPQLSVVTRVANLPLVSSTYDLVSSAYISRKDQYPYLKSLCEMAEKGMKTITSVAVTSALPIIQKLEPQIAVANTYACKGLDRIEEKLPILNQPTNQVVANAKGAMTGAKDAVTTTVTGAKDSVASTITGVVDRTKGAVTGSVEKTKSVVSGSINTVLRSRVMQLMSSGVENALTKSELLVDQYLPLTKDELEKEAKKVEGFDMVQKPSYYVRLGSLSTKLRSRAYQQALCRVEEAKRKGQETISQLHSAFNLSELARKNVHNANQKIQDAQDKLYLSWLEWKRSIGYDDTDESHCAEHIESRTLAIARNLTQQLQTMCHTLLSNIQGLPQNIQDRANHLGVMAGDIYSVFRNAASFKEVSDGLLASSKGQLQKMKESLDDVMDYLVNNTPLNWLVGPFYPQVTESESAQAPGTTRRPGRWSRKHPKPVPVSNAEGSQPDDSSS</sequence>
<evidence type="ECO:0000250" key="1">
    <source>
        <dbReference type="UniProtKB" id="P43883"/>
    </source>
</evidence>
<evidence type="ECO:0000250" key="2">
    <source>
        <dbReference type="UniProtKB" id="Q99541"/>
    </source>
</evidence>
<evidence type="ECO:0000256" key="3">
    <source>
        <dbReference type="SAM" id="MobiDB-lite"/>
    </source>
</evidence>
<evidence type="ECO:0000269" key="4">
    <source>
    </source>
</evidence>
<evidence type="ECO:0000303" key="5">
    <source ref="2"/>
</evidence>
<evidence type="ECO:0000305" key="6"/>